<comment type="function">
    <text evidence="1">Catalyzes the transfer of a dimethylallyl group onto the adenine at position 37 in tRNAs that read codons beginning with uridine, leading to the formation of N6-(dimethylallyl)adenosine (i(6)A).</text>
</comment>
<comment type="catalytic activity">
    <reaction evidence="1">
        <text>adenosine(37) in tRNA + dimethylallyl diphosphate = N(6)-dimethylallyladenosine(37) in tRNA + diphosphate</text>
        <dbReference type="Rhea" id="RHEA:26482"/>
        <dbReference type="Rhea" id="RHEA-COMP:10162"/>
        <dbReference type="Rhea" id="RHEA-COMP:10375"/>
        <dbReference type="ChEBI" id="CHEBI:33019"/>
        <dbReference type="ChEBI" id="CHEBI:57623"/>
        <dbReference type="ChEBI" id="CHEBI:74411"/>
        <dbReference type="ChEBI" id="CHEBI:74415"/>
        <dbReference type="EC" id="2.5.1.75"/>
    </reaction>
</comment>
<comment type="cofactor">
    <cofactor evidence="1">
        <name>Mg(2+)</name>
        <dbReference type="ChEBI" id="CHEBI:18420"/>
    </cofactor>
</comment>
<comment type="subunit">
    <text evidence="1">Monomer.</text>
</comment>
<comment type="similarity">
    <text evidence="1">Belongs to the IPP transferase family.</text>
</comment>
<organism>
    <name type="scientific">Dehalococcoides mccartyi (strain ATCC BAA-2100 / JCM 16839 / KCTC 5957 / BAV1)</name>
    <dbReference type="NCBI Taxonomy" id="216389"/>
    <lineage>
        <taxon>Bacteria</taxon>
        <taxon>Bacillati</taxon>
        <taxon>Chloroflexota</taxon>
        <taxon>Dehalococcoidia</taxon>
        <taxon>Dehalococcoidales</taxon>
        <taxon>Dehalococcoidaceae</taxon>
        <taxon>Dehalococcoides</taxon>
    </lineage>
</organism>
<gene>
    <name evidence="1" type="primary">miaA</name>
    <name type="ordered locus">DehaBAV1_0671</name>
</gene>
<reference key="1">
    <citation type="submission" date="2007-05" db="EMBL/GenBank/DDBJ databases">
        <title>Complete sequence of Dehalococcoides sp. BAV1.</title>
        <authorList>
            <consortium name="US DOE Joint Genome Institute"/>
            <person name="Copeland A."/>
            <person name="Lucas S."/>
            <person name="Lapidus A."/>
            <person name="Barry K."/>
            <person name="Detter J.C."/>
            <person name="Glavina del Rio T."/>
            <person name="Hammon N."/>
            <person name="Israni S."/>
            <person name="Pitluck S."/>
            <person name="Lowry S."/>
            <person name="Clum A."/>
            <person name="Schmutz J."/>
            <person name="Larimer F."/>
            <person name="Land M."/>
            <person name="Hauser L."/>
            <person name="Kyrpides N."/>
            <person name="Kim E."/>
            <person name="Ritalahti K.M."/>
            <person name="Loeffler F."/>
            <person name="Richardson P."/>
        </authorList>
    </citation>
    <scope>NUCLEOTIDE SEQUENCE [LARGE SCALE GENOMIC DNA]</scope>
    <source>
        <strain>ATCC BAA-2100 / JCM 16839 / KCTC 5957 / BAV1</strain>
    </source>
</reference>
<dbReference type="EC" id="2.5.1.75" evidence="1"/>
<dbReference type="EMBL" id="CP000688">
    <property type="protein sequence ID" value="ABQ17255.1"/>
    <property type="molecule type" value="Genomic_DNA"/>
</dbReference>
<dbReference type="SMR" id="A5FRB5"/>
<dbReference type="KEGG" id="deb:DehaBAV1_0671"/>
<dbReference type="PATRIC" id="fig|216389.18.peg.720"/>
<dbReference type="HOGENOM" id="CLU_032616_0_1_0"/>
<dbReference type="GO" id="GO:0005524">
    <property type="term" value="F:ATP binding"/>
    <property type="evidence" value="ECO:0007669"/>
    <property type="project" value="UniProtKB-UniRule"/>
</dbReference>
<dbReference type="GO" id="GO:0052381">
    <property type="term" value="F:tRNA dimethylallyltransferase activity"/>
    <property type="evidence" value="ECO:0007669"/>
    <property type="project" value="UniProtKB-UniRule"/>
</dbReference>
<dbReference type="GO" id="GO:0006400">
    <property type="term" value="P:tRNA modification"/>
    <property type="evidence" value="ECO:0007669"/>
    <property type="project" value="TreeGrafter"/>
</dbReference>
<dbReference type="Gene3D" id="1.10.20.140">
    <property type="match status" value="1"/>
</dbReference>
<dbReference type="Gene3D" id="3.40.50.300">
    <property type="entry name" value="P-loop containing nucleotide triphosphate hydrolases"/>
    <property type="match status" value="1"/>
</dbReference>
<dbReference type="HAMAP" id="MF_00185">
    <property type="entry name" value="IPP_trans"/>
    <property type="match status" value="1"/>
</dbReference>
<dbReference type="InterPro" id="IPR039657">
    <property type="entry name" value="Dimethylallyltransferase"/>
</dbReference>
<dbReference type="InterPro" id="IPR018022">
    <property type="entry name" value="IPT"/>
</dbReference>
<dbReference type="InterPro" id="IPR027417">
    <property type="entry name" value="P-loop_NTPase"/>
</dbReference>
<dbReference type="NCBIfam" id="TIGR00174">
    <property type="entry name" value="miaA"/>
    <property type="match status" value="1"/>
</dbReference>
<dbReference type="PANTHER" id="PTHR11088">
    <property type="entry name" value="TRNA DIMETHYLALLYLTRANSFERASE"/>
    <property type="match status" value="1"/>
</dbReference>
<dbReference type="PANTHER" id="PTHR11088:SF60">
    <property type="entry name" value="TRNA DIMETHYLALLYLTRANSFERASE"/>
    <property type="match status" value="1"/>
</dbReference>
<dbReference type="Pfam" id="PF01715">
    <property type="entry name" value="IPPT"/>
    <property type="match status" value="1"/>
</dbReference>
<dbReference type="SUPFAM" id="SSF52540">
    <property type="entry name" value="P-loop containing nucleoside triphosphate hydrolases"/>
    <property type="match status" value="1"/>
</dbReference>
<name>MIAA_DEHMB</name>
<protein>
    <recommendedName>
        <fullName evidence="1">tRNA dimethylallyltransferase</fullName>
        <ecNumber evidence="1">2.5.1.75</ecNumber>
    </recommendedName>
    <alternativeName>
        <fullName evidence="1">Dimethylallyl diphosphate:tRNA dimethylallyltransferase</fullName>
        <shortName evidence="1">DMAPP:tRNA dimethylallyltransferase</shortName>
        <shortName evidence="1">DMATase</shortName>
    </alternativeName>
    <alternativeName>
        <fullName evidence="1">Isopentenyl-diphosphate:tRNA isopentenyltransferase</fullName>
        <shortName evidence="1">IPP transferase</shortName>
        <shortName evidence="1">IPPT</shortName>
        <shortName evidence="1">IPTase</shortName>
    </alternativeName>
</protein>
<keyword id="KW-0067">ATP-binding</keyword>
<keyword id="KW-0460">Magnesium</keyword>
<keyword id="KW-0547">Nucleotide-binding</keyword>
<keyword id="KW-0808">Transferase</keyword>
<keyword id="KW-0819">tRNA processing</keyword>
<proteinExistence type="inferred from homology"/>
<sequence>MSIIDSTTGANASNLPLSPLLVILGNTGSGKSALAINLAKVIPAGIINADSRQIYSRMDIATAKPTLSEMLEIPHYLYSFIQPDQPFSLAEYQTLAYQAIDSLHTQNRLPVLVGGSGQYLKAVLEGWSIPPVAPDETFRAALFEKAEKEGGDVIFTELEKKDPQAATQIDPRNIRRVVRALEVIHKTGGKFSGLLIKNPPPYRVFKIGIHIPREELYRTVDLRVEKMLEQGLEAEVRSLLEKGYKASLPSMSGIGYRQIAKYIEGGISLTEAVEQMKFETHRLIRQQNTYFRLTDTNIHWITLEESRSNGIIQLVCDFLAAENKNEIH</sequence>
<evidence type="ECO:0000255" key="1">
    <source>
        <dbReference type="HAMAP-Rule" id="MF_00185"/>
    </source>
</evidence>
<feature type="chain" id="PRO_0000377138" description="tRNA dimethylallyltransferase">
    <location>
        <begin position="1"/>
        <end position="328"/>
    </location>
</feature>
<feature type="region of interest" description="Interaction with substrate tRNA" evidence="1">
    <location>
        <begin position="50"/>
        <end position="53"/>
    </location>
</feature>
<feature type="binding site" evidence="1">
    <location>
        <begin position="25"/>
        <end position="32"/>
    </location>
    <ligand>
        <name>ATP</name>
        <dbReference type="ChEBI" id="CHEBI:30616"/>
    </ligand>
</feature>
<feature type="binding site" evidence="1">
    <location>
        <begin position="27"/>
        <end position="32"/>
    </location>
    <ligand>
        <name>substrate</name>
    </ligand>
</feature>
<feature type="site" description="Interaction with substrate tRNA" evidence="1">
    <location>
        <position position="116"/>
    </location>
</feature>
<feature type="site" description="Interaction with substrate tRNA" evidence="1">
    <location>
        <position position="139"/>
    </location>
</feature>
<accession>A5FRB5</accession>